<dbReference type="EMBL" id="U03852">
    <property type="protein sequence ID" value="AAA17650.1"/>
    <property type="molecule type" value="Unassigned_DNA"/>
</dbReference>
<dbReference type="PIR" id="B49889">
    <property type="entry name" value="B49889"/>
</dbReference>
<dbReference type="RefSeq" id="WP_003365153.1">
    <property type="nucleotide sequence ID" value="NZ_MLEV01000001.1"/>
</dbReference>
<dbReference type="SMR" id="P37931"/>
<dbReference type="GO" id="GO:0005524">
    <property type="term" value="F:ATP binding"/>
    <property type="evidence" value="ECO:0007669"/>
    <property type="project" value="UniProtKB-KW"/>
</dbReference>
<dbReference type="GO" id="GO:0016887">
    <property type="term" value="F:ATP hydrolysis activity"/>
    <property type="evidence" value="ECO:0007669"/>
    <property type="project" value="InterPro"/>
</dbReference>
<dbReference type="GO" id="GO:0043565">
    <property type="term" value="F:sequence-specific DNA binding"/>
    <property type="evidence" value="ECO:0007669"/>
    <property type="project" value="InterPro"/>
</dbReference>
<dbReference type="GO" id="GO:0000160">
    <property type="term" value="P:phosphorelay signal transduction system"/>
    <property type="evidence" value="ECO:0007669"/>
    <property type="project" value="UniProtKB-KW"/>
</dbReference>
<dbReference type="GO" id="GO:0006355">
    <property type="term" value="P:regulation of DNA-templated transcription"/>
    <property type="evidence" value="ECO:0007669"/>
    <property type="project" value="InterPro"/>
</dbReference>
<dbReference type="GO" id="GO:0052040">
    <property type="term" value="P:symbiont-mediated perturbation of host programmed cell death"/>
    <property type="evidence" value="ECO:0007669"/>
    <property type="project" value="UniProtKB-KW"/>
</dbReference>
<dbReference type="CDD" id="cd00009">
    <property type="entry name" value="AAA"/>
    <property type="match status" value="1"/>
</dbReference>
<dbReference type="FunFam" id="3.40.50.300:FF:000006">
    <property type="entry name" value="DNA-binding transcriptional regulator NtrC"/>
    <property type="match status" value="1"/>
</dbReference>
<dbReference type="Gene3D" id="1.10.8.60">
    <property type="match status" value="1"/>
</dbReference>
<dbReference type="Gene3D" id="1.10.10.60">
    <property type="entry name" value="Homeodomain-like"/>
    <property type="match status" value="1"/>
</dbReference>
<dbReference type="Gene3D" id="3.40.50.300">
    <property type="entry name" value="P-loop containing nucleotide triphosphate hydrolases"/>
    <property type="match status" value="1"/>
</dbReference>
<dbReference type="InterPro" id="IPR003593">
    <property type="entry name" value="AAA+_ATPase"/>
</dbReference>
<dbReference type="InterPro" id="IPR009057">
    <property type="entry name" value="Homeodomain-like_sf"/>
</dbReference>
<dbReference type="InterPro" id="IPR002197">
    <property type="entry name" value="HTH_Fis"/>
</dbReference>
<dbReference type="InterPro" id="IPR027417">
    <property type="entry name" value="P-loop_NTPase"/>
</dbReference>
<dbReference type="InterPro" id="IPR002078">
    <property type="entry name" value="Sigma_54_int"/>
</dbReference>
<dbReference type="InterPro" id="IPR025943">
    <property type="entry name" value="Sigma_54_int_dom_ATP-bd_2"/>
</dbReference>
<dbReference type="InterPro" id="IPR025944">
    <property type="entry name" value="Sigma_54_int_dom_CS"/>
</dbReference>
<dbReference type="PANTHER" id="PTHR32071:SF57">
    <property type="entry name" value="C4-DICARBOXYLATE TRANSPORT TRANSCRIPTIONAL REGULATORY PROTEIN DCTD"/>
    <property type="match status" value="1"/>
</dbReference>
<dbReference type="PANTHER" id="PTHR32071">
    <property type="entry name" value="TRANSCRIPTIONAL REGULATORY PROTEIN"/>
    <property type="match status" value="1"/>
</dbReference>
<dbReference type="Pfam" id="PF02954">
    <property type="entry name" value="HTH_8"/>
    <property type="match status" value="1"/>
</dbReference>
<dbReference type="Pfam" id="PF00158">
    <property type="entry name" value="Sigma54_activat"/>
    <property type="match status" value="1"/>
</dbReference>
<dbReference type="SMART" id="SM00382">
    <property type="entry name" value="AAA"/>
    <property type="match status" value="1"/>
</dbReference>
<dbReference type="SUPFAM" id="SSF46689">
    <property type="entry name" value="Homeodomain-like"/>
    <property type="match status" value="1"/>
</dbReference>
<dbReference type="SUPFAM" id="SSF52540">
    <property type="entry name" value="P-loop containing nucleoside triphosphate hydrolases"/>
    <property type="match status" value="1"/>
</dbReference>
<dbReference type="PROSITE" id="PS00676">
    <property type="entry name" value="SIGMA54_INTERACT_2"/>
    <property type="match status" value="1"/>
</dbReference>
<dbReference type="PROSITE" id="PS00688">
    <property type="entry name" value="SIGMA54_INTERACT_3"/>
    <property type="match status" value="1"/>
</dbReference>
<dbReference type="PROSITE" id="PS50045">
    <property type="entry name" value="SIGMA54_INTERACT_4"/>
    <property type="match status" value="1"/>
</dbReference>
<feature type="chain" id="PRO_0000081323" description="Pathogenicity locus probable regulatory protein HrpS">
    <location>
        <begin position="1"/>
        <end position="302"/>
    </location>
</feature>
<feature type="domain" description="Sigma-54 factor interaction" evidence="2">
    <location>
        <begin position="9"/>
        <end position="237"/>
    </location>
</feature>
<feature type="DNA-binding region" description="H-T-H motif" evidence="1">
    <location>
        <begin position="279"/>
        <end position="298"/>
    </location>
</feature>
<feature type="binding site" evidence="2">
    <location>
        <begin position="37"/>
        <end position="44"/>
    </location>
    <ligand>
        <name>ATP</name>
        <dbReference type="ChEBI" id="CHEBI:30616"/>
    </ligand>
</feature>
<feature type="binding site" evidence="2">
    <location>
        <begin position="99"/>
        <end position="108"/>
    </location>
    <ligand>
        <name>ATP</name>
        <dbReference type="ChEBI" id="CHEBI:30616"/>
    </ligand>
</feature>
<proteinExistence type="predicted"/>
<name>HRPS_PSESY</name>
<evidence type="ECO:0000255" key="1"/>
<evidence type="ECO:0000255" key="2">
    <source>
        <dbReference type="PROSITE-ProRule" id="PRU00193"/>
    </source>
</evidence>
<comment type="function">
    <text>Regulates the activation of the sigma factor HrpL which itself induces the expression of hprD as well as other hrp loci which are involved in plant pathogenicity, hrmA and avr genes. Probably interacts with sigma-54.</text>
</comment>
<keyword id="KW-0010">Activator</keyword>
<keyword id="KW-0067">ATP-binding</keyword>
<keyword id="KW-0238">DNA-binding</keyword>
<keyword id="KW-0928">Hypersensitive response elicitation</keyword>
<keyword id="KW-0547">Nucleotide-binding</keyword>
<keyword id="KW-0804">Transcription</keyword>
<keyword id="KW-0805">Transcription regulation</keyword>
<keyword id="KW-0902">Two-component regulatory system</keyword>
<accession>P37931</accession>
<reference key="1">
    <citation type="journal article" date="1994" name="J. Bacteriol.">
        <title>Identification of a putative alternate sigma factor and characterization of a multicomponent regulatory cascade controlling the expression of Pseudomonas syringae pv. syringae Pss61 hrp and hrmA genes.</title>
        <authorList>
            <person name="Xiao Y."/>
            <person name="Heu S."/>
            <person name="Yi J."/>
            <person name="Lu Y."/>
            <person name="Hutcheson S.W."/>
        </authorList>
    </citation>
    <scope>NUCLEOTIDE SEQUENCE [GENOMIC DNA]</scope>
    <source>
        <strain>Pss61</strain>
    </source>
</reference>
<organism>
    <name type="scientific">Pseudomonas syringae pv. syringae</name>
    <dbReference type="NCBI Taxonomy" id="321"/>
    <lineage>
        <taxon>Bacteria</taxon>
        <taxon>Pseudomonadati</taxon>
        <taxon>Pseudomonadota</taxon>
        <taxon>Gammaproteobacteria</taxon>
        <taxon>Pseudomonadales</taxon>
        <taxon>Pseudomonadaceae</taxon>
        <taxon>Pseudomonas</taxon>
        <taxon>Pseudomonas syringae</taxon>
    </lineage>
</organism>
<sequence>MNLDDEFDDDLDAERVPNLGIVAESISQLGIDVLLSGETGTGKDTTARRIHNMSGRQGRFVPMNCAAIPESLAESELFGVVSGAYTGADRSRMGYIEAAQGGTLYLDEIDSMPLALQAKLLRVLETRALERLGSTSTIHLDICVIASAQASLDDAVEEGKFRRDLYFRLNVLTLKLPPLRDQPERILPLFTRFVAASAKELNVAIPDVCPLLQQVLTGHRWPGNIRELKAAAKRHVLGFPLLGADSQTEEHMACGLKFQLRAIEKALIQQALKRHRNCIDAASLELDIPRRTLYRRIKELSI</sequence>
<protein>
    <recommendedName>
        <fullName>Pathogenicity locus probable regulatory protein HrpS</fullName>
    </recommendedName>
</protein>
<gene>
    <name type="primary">hrpS</name>
</gene>